<accession>P32032</accession>
<gene>
    <name type="primary">THI1.2</name>
    <name type="synonym">PUR-B1</name>
</gene>
<proteinExistence type="evidence at transcript level"/>
<comment type="function">
    <text>Thionins are small plant proteins which are toxic to animal cells. They seem to exert their toxic effect at the level of the cell membrane. Their precise function is not known.</text>
</comment>
<comment type="subcellular location">
    <subcellularLocation>
        <location evidence="3">Secreted</location>
    </subcellularLocation>
</comment>
<comment type="similarity">
    <text evidence="3">Belongs to the plant thionin (TC 1.C.44) family. 4 C-C subfamily.</text>
</comment>
<organism>
    <name type="scientific">Triticum aestivum</name>
    <name type="common">Wheat</name>
    <dbReference type="NCBI Taxonomy" id="4565"/>
    <lineage>
        <taxon>Eukaryota</taxon>
        <taxon>Viridiplantae</taxon>
        <taxon>Streptophyta</taxon>
        <taxon>Embryophyta</taxon>
        <taxon>Tracheophyta</taxon>
        <taxon>Spermatophyta</taxon>
        <taxon>Magnoliopsida</taxon>
        <taxon>Liliopsida</taxon>
        <taxon>Poales</taxon>
        <taxon>Poaceae</taxon>
        <taxon>BOP clade</taxon>
        <taxon>Pooideae</taxon>
        <taxon>Triticodae</taxon>
        <taxon>Triticeae</taxon>
        <taxon>Triticinae</taxon>
        <taxon>Triticum</taxon>
    </lineage>
</organism>
<reference key="1">
    <citation type="journal article" date="1994" name="Plant Physiol.">
        <title>cDNA cloning and nucleotide sequences of alpha 1 and alpha 2 thionins from hexaploid wheat endosperm.</title>
        <authorList>
            <person name="Castagnaro A."/>
            <person name="Marana C."/>
            <person name="Carbonero P."/>
            <person name="Garcia-Olmedo F."/>
        </authorList>
    </citation>
    <scope>NUCLEOTIDE SEQUENCE [MRNA]</scope>
    <source>
        <tissue>Endosperm</tissue>
    </source>
</reference>
<feature type="signal peptide" evidence="2">
    <location>
        <begin position="1"/>
        <end position="27"/>
    </location>
</feature>
<feature type="chain" id="PRO_0000034128" description="Alpha-2-purothionin">
    <location>
        <begin position="28"/>
        <end position="72"/>
    </location>
</feature>
<feature type="propeptide" id="PRO_0000459417" description="Acidic domain" evidence="3">
    <location>
        <begin position="73"/>
        <end position="136"/>
    </location>
</feature>
<feature type="disulfide bond" evidence="1">
    <location>
        <begin position="30"/>
        <end position="66"/>
    </location>
</feature>
<feature type="disulfide bond" evidence="1">
    <location>
        <begin position="31"/>
        <end position="58"/>
    </location>
</feature>
<feature type="disulfide bond" evidence="1">
    <location>
        <begin position="39"/>
        <end position="56"/>
    </location>
</feature>
<feature type="disulfide bond" evidence="1">
    <location>
        <begin position="43"/>
        <end position="52"/>
    </location>
</feature>
<name>THN2_WHEAT</name>
<sequence>MGSKGLKGVMVCLLILGLVLEQVQVEGKSCCRTTLGRNCYNLCRSRGAQKLCSTVCRCKLTSGLSCPKGFPKLALESNSDEPDTIEYCNLGCRSSVCDYMVNAAADDEEMKLYVENCGDACVNFCNGDAGLTSLDA</sequence>
<evidence type="ECO:0000250" key="1">
    <source>
        <dbReference type="UniProtKB" id="P21742"/>
    </source>
</evidence>
<evidence type="ECO:0000255" key="2"/>
<evidence type="ECO:0000305" key="3"/>
<protein>
    <recommendedName>
        <fullName>Alpha-2-purothionin</fullName>
    </recommendedName>
</protein>
<keyword id="KW-1015">Disulfide bond</keyword>
<keyword id="KW-0611">Plant defense</keyword>
<keyword id="KW-1185">Reference proteome</keyword>
<keyword id="KW-0964">Secreted</keyword>
<keyword id="KW-0732">Signal</keyword>
<keyword id="KW-0800">Toxin</keyword>
<dbReference type="EMBL" id="X70665">
    <property type="protein sequence ID" value="CAA50003.1"/>
    <property type="molecule type" value="mRNA"/>
</dbReference>
<dbReference type="PIR" id="S31695">
    <property type="entry name" value="S31695"/>
</dbReference>
<dbReference type="RefSeq" id="NP_001392710.1">
    <property type="nucleotide sequence ID" value="NM_001405781.1"/>
</dbReference>
<dbReference type="SMR" id="P32032"/>
<dbReference type="Allergome" id="9834">
    <property type="allergen name" value="Tri a 37"/>
</dbReference>
<dbReference type="PaxDb" id="4565-Traes_1DL_AB9D8EBCA.1"/>
<dbReference type="EnsemblPlants" id="TraesCAD_scaffold_059422_01G000500.1">
    <property type="protein sequence ID" value="TraesCAD_scaffold_059422_01G000500.1"/>
    <property type="gene ID" value="TraesCAD_scaffold_059422_01G000500"/>
</dbReference>
<dbReference type="EnsemblPlants" id="TraesCLE_scaffold_055580_01G000600.1">
    <property type="protein sequence ID" value="TraesCLE_scaffold_055580_01G000600.1"/>
    <property type="gene ID" value="TraesCLE_scaffold_055580_01G000600"/>
</dbReference>
<dbReference type="EnsemblPlants" id="TraesCS1D02G405700.1">
    <property type="protein sequence ID" value="TraesCS1D02G405700.1"/>
    <property type="gene ID" value="TraesCS1D02G405700"/>
</dbReference>
<dbReference type="EnsemblPlants" id="TraesCS1D03G0943800.1">
    <property type="protein sequence ID" value="TraesCS1D03G0943800.1.CDS"/>
    <property type="gene ID" value="TraesCS1D03G0943800"/>
</dbReference>
<dbReference type="EnsemblPlants" id="TraesJAG1D03G00561990.1">
    <property type="protein sequence ID" value="TraesJAG1D03G00561990.1"/>
    <property type="gene ID" value="TraesJAG1D03G00561990"/>
</dbReference>
<dbReference type="EnsemblPlants" id="TraesJUL1D03G00565610.1">
    <property type="protein sequence ID" value="TraesJUL1D03G00565610.1"/>
    <property type="gene ID" value="TraesJUL1D03G00565610"/>
</dbReference>
<dbReference type="EnsemblPlants" id="TraesLAC1D03G00566470.1">
    <property type="protein sequence ID" value="TraesLAC1D03G00566470.1"/>
    <property type="gene ID" value="TraesLAC1D03G00566470"/>
</dbReference>
<dbReference type="EnsemblPlants" id="TraesLDM1D03G00564850.1">
    <property type="protein sequence ID" value="TraesLDM1D03G00564850.1"/>
    <property type="gene ID" value="TraesLDM1D03G00564850"/>
</dbReference>
<dbReference type="EnsemblPlants" id="TraesMAC1D03G00562120.1">
    <property type="protein sequence ID" value="TraesMAC1D03G00562120.1"/>
    <property type="gene ID" value="TraesMAC1D03G00562120"/>
</dbReference>
<dbReference type="EnsemblPlants" id="TraesNOR1D03G00570590.1">
    <property type="protein sequence ID" value="TraesNOR1D03G00570590.1"/>
    <property type="gene ID" value="TraesNOR1D03G00570590"/>
</dbReference>
<dbReference type="EnsemblPlants" id="TraesPARA_EIv1.0_0319510.1">
    <property type="protein sequence ID" value="TraesPARA_EIv1.0_0319510.1.CDS"/>
    <property type="gene ID" value="TraesPARA_EIv1.0_0319510"/>
</dbReference>
<dbReference type="EnsemblPlants" id="TraesROB_scaffold_057461_01G000600.1">
    <property type="protein sequence ID" value="TraesROB_scaffold_057461_01G000600.1"/>
    <property type="gene ID" value="TraesROB_scaffold_057461_01G000600"/>
</dbReference>
<dbReference type="EnsemblPlants" id="TraesSTA1D03G00561670.1">
    <property type="protein sequence ID" value="TraesSTA1D03G00561670.1"/>
    <property type="gene ID" value="TraesSTA1D03G00561670"/>
</dbReference>
<dbReference type="EnsemblPlants" id="TraesSYM1D03G00569770.1">
    <property type="protein sequence ID" value="TraesSYM1D03G00569770.1"/>
    <property type="gene ID" value="TraesSYM1D03G00569770"/>
</dbReference>
<dbReference type="EnsemblPlants" id="TraesWEE_scaffold_055449_01G000200.1">
    <property type="protein sequence ID" value="TraesWEE_scaffold_055449_01G000200.1"/>
    <property type="gene ID" value="TraesWEE_scaffold_055449_01G000200"/>
</dbReference>
<dbReference type="GeneID" id="543304"/>
<dbReference type="Gramene" id="TraesCAD_scaffold_059422_01G000500.1">
    <property type="protein sequence ID" value="TraesCAD_scaffold_059422_01G000500.1"/>
    <property type="gene ID" value="TraesCAD_scaffold_059422_01G000500"/>
</dbReference>
<dbReference type="Gramene" id="TraesCLE_scaffold_055580_01G000600.1">
    <property type="protein sequence ID" value="TraesCLE_scaffold_055580_01G000600.1"/>
    <property type="gene ID" value="TraesCLE_scaffold_055580_01G000600"/>
</dbReference>
<dbReference type="Gramene" id="TraesCS1D02G405700.1">
    <property type="protein sequence ID" value="TraesCS1D02G405700.1"/>
    <property type="gene ID" value="TraesCS1D02G405700"/>
</dbReference>
<dbReference type="Gramene" id="TraesCS1D03G0943800.1">
    <property type="protein sequence ID" value="TraesCS1D03G0943800.1.CDS"/>
    <property type="gene ID" value="TraesCS1D03G0943800"/>
</dbReference>
<dbReference type="Gramene" id="TraesJAG1D03G00561990.1">
    <property type="protein sequence ID" value="TraesJAG1D03G00561990.1"/>
    <property type="gene ID" value="TraesJAG1D03G00561990"/>
</dbReference>
<dbReference type="Gramene" id="TraesJUL1D03G00565610.1">
    <property type="protein sequence ID" value="TraesJUL1D03G00565610.1"/>
    <property type="gene ID" value="TraesJUL1D03G00565610"/>
</dbReference>
<dbReference type="Gramene" id="TraesLAC1D03G00566470.1">
    <property type="protein sequence ID" value="TraesLAC1D03G00566470.1"/>
    <property type="gene ID" value="TraesLAC1D03G00566470"/>
</dbReference>
<dbReference type="Gramene" id="TraesLDM1D03G00564850.1">
    <property type="protein sequence ID" value="TraesLDM1D03G00564850.1"/>
    <property type="gene ID" value="TraesLDM1D03G00564850"/>
</dbReference>
<dbReference type="Gramene" id="TraesMAC1D03G00562120.1">
    <property type="protein sequence ID" value="TraesMAC1D03G00562120.1"/>
    <property type="gene ID" value="TraesMAC1D03G00562120"/>
</dbReference>
<dbReference type="Gramene" id="TraesNOR1D03G00570590.1">
    <property type="protein sequence ID" value="TraesNOR1D03G00570590.1"/>
    <property type="gene ID" value="TraesNOR1D03G00570590"/>
</dbReference>
<dbReference type="Gramene" id="TraesPARA_EIv1.0_0319510.1">
    <property type="protein sequence ID" value="TraesPARA_EIv1.0_0319510.1.CDS"/>
    <property type="gene ID" value="TraesPARA_EIv1.0_0319510"/>
</dbReference>
<dbReference type="Gramene" id="TraesROB_scaffold_057461_01G000600.1">
    <property type="protein sequence ID" value="TraesROB_scaffold_057461_01G000600.1"/>
    <property type="gene ID" value="TraesROB_scaffold_057461_01G000600"/>
</dbReference>
<dbReference type="Gramene" id="TraesSTA1D03G00561670.1">
    <property type="protein sequence ID" value="TraesSTA1D03G00561670.1"/>
    <property type="gene ID" value="TraesSTA1D03G00561670"/>
</dbReference>
<dbReference type="Gramene" id="TraesSYM1D03G00569770.1">
    <property type="protein sequence ID" value="TraesSYM1D03G00569770.1"/>
    <property type="gene ID" value="TraesSYM1D03G00569770"/>
</dbReference>
<dbReference type="Gramene" id="TraesWEE_scaffold_055449_01G000200.1">
    <property type="protein sequence ID" value="TraesWEE_scaffold_055449_01G000200.1"/>
    <property type="gene ID" value="TraesWEE_scaffold_055449_01G000200"/>
</dbReference>
<dbReference type="eggNOG" id="ENOG502R3I9">
    <property type="taxonomic scope" value="Eukaryota"/>
</dbReference>
<dbReference type="HOGENOM" id="CLU_132328_0_0_1"/>
<dbReference type="OMA" id="TICTKDP"/>
<dbReference type="OrthoDB" id="653285at2759"/>
<dbReference type="Proteomes" id="UP000019116">
    <property type="component" value="Chromosome 1D"/>
</dbReference>
<dbReference type="ExpressionAtlas" id="P32032">
    <property type="expression patterns" value="baseline and differential"/>
</dbReference>
<dbReference type="GO" id="GO:0005576">
    <property type="term" value="C:extracellular region"/>
    <property type="evidence" value="ECO:0007669"/>
    <property type="project" value="UniProtKB-SubCell"/>
</dbReference>
<dbReference type="GO" id="GO:0090729">
    <property type="term" value="F:toxin activity"/>
    <property type="evidence" value="ECO:0007669"/>
    <property type="project" value="UniProtKB-KW"/>
</dbReference>
<dbReference type="GO" id="GO:0006952">
    <property type="term" value="P:defense response"/>
    <property type="evidence" value="ECO:0007669"/>
    <property type="project" value="UniProtKB-KW"/>
</dbReference>
<dbReference type="FunFam" id="3.30.1350.10:FF:000001">
    <property type="entry name" value="Hellethionin-D"/>
    <property type="match status" value="1"/>
</dbReference>
<dbReference type="Gene3D" id="3.30.1350.10">
    <property type="entry name" value="Thionin-like"/>
    <property type="match status" value="1"/>
</dbReference>
<dbReference type="InterPro" id="IPR001010">
    <property type="entry name" value="Thionin"/>
</dbReference>
<dbReference type="InterPro" id="IPR036391">
    <property type="entry name" value="Thionin-like_sf"/>
</dbReference>
<dbReference type="PANTHER" id="PTHR33920:SF9">
    <property type="entry name" value="ALPHA-2-PUROTHIONIN"/>
    <property type="match status" value="1"/>
</dbReference>
<dbReference type="PANTHER" id="PTHR33920">
    <property type="entry name" value="THIONIN-2.1-RELATED"/>
    <property type="match status" value="1"/>
</dbReference>
<dbReference type="Pfam" id="PF00321">
    <property type="entry name" value="Thionin"/>
    <property type="match status" value="1"/>
</dbReference>
<dbReference type="PRINTS" id="PR00287">
    <property type="entry name" value="THIONIN"/>
</dbReference>
<dbReference type="SUPFAM" id="SSF57429">
    <property type="entry name" value="Crambin-like"/>
    <property type="match status" value="1"/>
</dbReference>
<dbReference type="PROSITE" id="PS00271">
    <property type="entry name" value="THIONIN"/>
    <property type="match status" value="1"/>
</dbReference>